<organism>
    <name type="scientific">Oryza sativa subsp. japonica</name>
    <name type="common">Rice</name>
    <dbReference type="NCBI Taxonomy" id="39947"/>
    <lineage>
        <taxon>Eukaryota</taxon>
        <taxon>Viridiplantae</taxon>
        <taxon>Streptophyta</taxon>
        <taxon>Embryophyta</taxon>
        <taxon>Tracheophyta</taxon>
        <taxon>Spermatophyta</taxon>
        <taxon>Magnoliopsida</taxon>
        <taxon>Liliopsida</taxon>
        <taxon>Poales</taxon>
        <taxon>Poaceae</taxon>
        <taxon>BOP clade</taxon>
        <taxon>Oryzoideae</taxon>
        <taxon>Oryzeae</taxon>
        <taxon>Oryzinae</taxon>
        <taxon>Oryza</taxon>
        <taxon>Oryza sativa</taxon>
    </lineage>
</organism>
<keyword id="KW-0025">Alternative splicing</keyword>
<keyword id="KW-0175">Coiled coil</keyword>
<keyword id="KW-0238">DNA-binding</keyword>
<keyword id="KW-0371">Homeobox</keyword>
<keyword id="KW-0539">Nucleus</keyword>
<keyword id="KW-1185">Reference proteome</keyword>
<keyword id="KW-0804">Transcription</keyword>
<keyword id="KW-0805">Transcription regulation</keyword>
<reference key="1">
    <citation type="journal article" date="2002" name="Plant Cell Physiol.">
        <title>OSTF1: a HD-GL2 family homeobox gene is developmentally regulated during early embryogenesis in rice.</title>
        <authorList>
            <person name="Yang J.-Y."/>
            <person name="Chung M.-C."/>
            <person name="Tu C.-Y."/>
            <person name="Leu W.-M."/>
        </authorList>
    </citation>
    <scope>NUCLEOTIDE SEQUENCE [MRNA] (ISOFORM 1)</scope>
    <scope>DEVELOPMENTAL STAGE</scope>
    <source>
        <strain>cv. Tainung 67</strain>
        <tissue>Panicle</tissue>
    </source>
</reference>
<reference key="2">
    <citation type="journal article" date="2002" name="Nature">
        <title>The genome sequence and structure of rice chromosome 1.</title>
        <authorList>
            <person name="Sasaki T."/>
            <person name="Matsumoto T."/>
            <person name="Yamamoto K."/>
            <person name="Sakata K."/>
            <person name="Baba T."/>
            <person name="Katayose Y."/>
            <person name="Wu J."/>
            <person name="Niimura Y."/>
            <person name="Cheng Z."/>
            <person name="Nagamura Y."/>
            <person name="Antonio B.A."/>
            <person name="Kanamori H."/>
            <person name="Hosokawa S."/>
            <person name="Masukawa M."/>
            <person name="Arikawa K."/>
            <person name="Chiden Y."/>
            <person name="Hayashi M."/>
            <person name="Okamoto M."/>
            <person name="Ando T."/>
            <person name="Aoki H."/>
            <person name="Arita K."/>
            <person name="Hamada M."/>
            <person name="Harada C."/>
            <person name="Hijishita S."/>
            <person name="Honda M."/>
            <person name="Ichikawa Y."/>
            <person name="Idonuma A."/>
            <person name="Iijima M."/>
            <person name="Ikeda M."/>
            <person name="Ikeno M."/>
            <person name="Ito S."/>
            <person name="Ito T."/>
            <person name="Ito Y."/>
            <person name="Ito Y."/>
            <person name="Iwabuchi A."/>
            <person name="Kamiya K."/>
            <person name="Karasawa W."/>
            <person name="Katagiri S."/>
            <person name="Kikuta A."/>
            <person name="Kobayashi N."/>
            <person name="Kono I."/>
            <person name="Machita K."/>
            <person name="Maehara T."/>
            <person name="Mizuno H."/>
            <person name="Mizubayashi T."/>
            <person name="Mukai Y."/>
            <person name="Nagasaki H."/>
            <person name="Nakashima M."/>
            <person name="Nakama Y."/>
            <person name="Nakamichi Y."/>
            <person name="Nakamura M."/>
            <person name="Namiki N."/>
            <person name="Negishi M."/>
            <person name="Ohta I."/>
            <person name="Ono N."/>
            <person name="Saji S."/>
            <person name="Sakai K."/>
            <person name="Shibata M."/>
            <person name="Shimokawa T."/>
            <person name="Shomura A."/>
            <person name="Song J."/>
            <person name="Takazaki Y."/>
            <person name="Terasawa K."/>
            <person name="Tsuji K."/>
            <person name="Waki K."/>
            <person name="Yamagata H."/>
            <person name="Yamane H."/>
            <person name="Yoshiki S."/>
            <person name="Yoshihara R."/>
            <person name="Yukawa K."/>
            <person name="Zhong H."/>
            <person name="Iwama H."/>
            <person name="Endo T."/>
            <person name="Ito H."/>
            <person name="Hahn J.H."/>
            <person name="Kim H.-I."/>
            <person name="Eun M.-Y."/>
            <person name="Yano M."/>
            <person name="Jiang J."/>
            <person name="Gojobori T."/>
        </authorList>
    </citation>
    <scope>NUCLEOTIDE SEQUENCE [LARGE SCALE GENOMIC DNA]</scope>
    <source>
        <strain>cv. Nipponbare</strain>
    </source>
</reference>
<reference key="3">
    <citation type="journal article" date="2005" name="Nature">
        <title>The map-based sequence of the rice genome.</title>
        <authorList>
            <consortium name="International rice genome sequencing project (IRGSP)"/>
        </authorList>
    </citation>
    <scope>NUCLEOTIDE SEQUENCE [LARGE SCALE GENOMIC DNA]</scope>
    <source>
        <strain>cv. Nipponbare</strain>
    </source>
</reference>
<reference key="4">
    <citation type="journal article" date="2008" name="Nucleic Acids Res.">
        <title>The rice annotation project database (RAP-DB): 2008 update.</title>
        <authorList>
            <consortium name="The rice annotation project (RAP)"/>
        </authorList>
    </citation>
    <scope>GENOME REANNOTATION</scope>
    <source>
        <strain>cv. Nipponbare</strain>
    </source>
</reference>
<reference key="5">
    <citation type="journal article" date="2013" name="Rice">
        <title>Improvement of the Oryza sativa Nipponbare reference genome using next generation sequence and optical map data.</title>
        <authorList>
            <person name="Kawahara Y."/>
            <person name="de la Bastide M."/>
            <person name="Hamilton J.P."/>
            <person name="Kanamori H."/>
            <person name="McCombie W.R."/>
            <person name="Ouyang S."/>
            <person name="Schwartz D.C."/>
            <person name="Tanaka T."/>
            <person name="Wu J."/>
            <person name="Zhou S."/>
            <person name="Childs K.L."/>
            <person name="Davidson R.M."/>
            <person name="Lin H."/>
            <person name="Quesada-Ocampo L."/>
            <person name="Vaillancourt B."/>
            <person name="Sakai H."/>
            <person name="Lee S.S."/>
            <person name="Kim J."/>
            <person name="Numa H."/>
            <person name="Itoh T."/>
            <person name="Buell C.R."/>
            <person name="Matsumoto T."/>
        </authorList>
    </citation>
    <scope>GENOME REANNOTATION</scope>
    <source>
        <strain>cv. Nipponbare</strain>
    </source>
</reference>
<reference key="6">
    <citation type="journal article" date="2003" name="Science">
        <title>Collection, mapping, and annotation of over 28,000 cDNA clones from japonica rice.</title>
        <authorList>
            <consortium name="The rice full-length cDNA consortium"/>
        </authorList>
    </citation>
    <scope>NUCLEOTIDE SEQUENCE [LARGE SCALE MRNA] (ISOFORM 2)</scope>
    <source>
        <strain>cv. Nipponbare</strain>
    </source>
</reference>
<comment type="function">
    <text evidence="1">Probable transcription factor.</text>
</comment>
<comment type="subcellular location">
    <subcellularLocation>
        <location evidence="7">Nucleus</location>
    </subcellularLocation>
</comment>
<comment type="alternative products">
    <event type="alternative splicing"/>
    <isoform>
        <id>Q5ZAY0-1</id>
        <name>1</name>
        <sequence type="displayed"/>
    </isoform>
    <isoform>
        <id>Q5ZAY0-2</id>
        <name>2</name>
        <sequence type="described" ref="VSP_033317 VSP_033318"/>
    </isoform>
</comment>
<comment type="developmental stage">
    <text evidence="5">Expressed in the embryo proper and both layers of the integument at 2 days after pollination (DAP). At 3 DAP, strongly expressed in the outer cell layer of the embryo and at lower levels in the integument and the outer endosperm layer (prealeurone layer). From 4 DAP to 6 DAP, expressed in the integument, the scutellar epithelium and embryo axis. Expression stongly decreases from 8 DAP to disappear completely at 10 DAP. Expressed in young seedlings developing roots at the root hair-forming side of epidermal cells.</text>
</comment>
<comment type="similarity">
    <text evidence="7">Belongs to the HD-ZIP homeobox family. Class IV subfamily.</text>
</comment>
<comment type="sequence caution" evidence="7">
    <conflict type="frameshift">
        <sequence resource="EMBL" id="AK121338"/>
    </conflict>
</comment>
<comment type="sequence caution" evidence="7">
    <conflict type="erroneous gene model prediction">
        <sequence resource="EMBL-CDS" id="BAD53270"/>
    </conflict>
</comment>
<comment type="sequence caution" evidence="7">
    <conflict type="erroneous gene model prediction">
        <sequence resource="EMBL-CDS" id="BAD53271"/>
    </conflict>
</comment>
<comment type="sequence caution" evidence="7">
    <conflict type="erroneous gene model prediction">
        <sequence resource="EMBL-CDS" id="BAD81956"/>
    </conflict>
</comment>
<comment type="sequence caution" evidence="7">
    <conflict type="erroneous gene model prediction">
        <sequence resource="EMBL-CDS" id="BAD81957"/>
    </conflict>
</comment>
<feature type="chain" id="PRO_0000331748" description="Homeobox-leucine zipper protein TF1">
    <location>
        <begin position="1"/>
        <end position="709"/>
    </location>
</feature>
<feature type="domain" description="START" evidence="4">
    <location>
        <begin position="212"/>
        <end position="441"/>
    </location>
</feature>
<feature type="DNA-binding region" description="Homeobox" evidence="3">
    <location>
        <begin position="66"/>
        <end position="125"/>
    </location>
</feature>
<feature type="coiled-coil region" evidence="2">
    <location>
        <begin position="166"/>
        <end position="187"/>
    </location>
</feature>
<feature type="splice variant" id="VSP_033317" description="In isoform 2." evidence="6">
    <location>
        <begin position="1"/>
        <end position="80"/>
    </location>
</feature>
<feature type="splice variant" id="VSP_033318" description="In isoform 2." evidence="6">
    <original>LEG</original>
    <variation>MNR</variation>
    <location>
        <begin position="81"/>
        <end position="83"/>
    </location>
</feature>
<feature type="sequence conflict" description="In Ref. 1; AAM88945." evidence="7" ref="1">
    <original>CM</original>
    <variation>RV</variation>
    <location>
        <begin position="417"/>
        <end position="418"/>
    </location>
</feature>
<gene>
    <name type="primary">TF1</name>
    <name type="ordered locus">Os01g0788800</name>
    <name type="ordered locus">LOC_Os01g57890</name>
    <name type="ORF">P0415A04.46-1</name>
    <name type="ORF">P0415A04.46-2</name>
    <name type="ORF">P0415A04.46-3</name>
    <name type="ORF">P0415A04.46-4</name>
    <name type="ORF">P0557A01.4-1</name>
    <name type="ORF">P0557A01.4-2</name>
    <name type="ORF">P0557A01.4-3</name>
    <name type="ORF">P0557A01.4-4</name>
</gene>
<name>TF1_ORYSJ</name>
<proteinExistence type="evidence at transcript level"/>
<dbReference type="EMBL" id="AF317882">
    <property type="protein sequence ID" value="AAM88945.1"/>
    <property type="molecule type" value="mRNA"/>
</dbReference>
<dbReference type="EMBL" id="AP003280">
    <property type="protein sequence ID" value="BAD81954.1"/>
    <property type="molecule type" value="Genomic_DNA"/>
</dbReference>
<dbReference type="EMBL" id="AP003280">
    <property type="protein sequence ID" value="BAD81955.1"/>
    <property type="molecule type" value="Genomic_DNA"/>
</dbReference>
<dbReference type="EMBL" id="AP003280">
    <property type="protein sequence ID" value="BAD81956.1"/>
    <property type="status" value="ALT_SEQ"/>
    <property type="molecule type" value="Genomic_DNA"/>
</dbReference>
<dbReference type="EMBL" id="AP003280">
    <property type="protein sequence ID" value="BAD81957.1"/>
    <property type="status" value="ALT_SEQ"/>
    <property type="molecule type" value="Genomic_DNA"/>
</dbReference>
<dbReference type="EMBL" id="AP003345">
    <property type="protein sequence ID" value="BAD53268.1"/>
    <property type="molecule type" value="Genomic_DNA"/>
</dbReference>
<dbReference type="EMBL" id="AP003345">
    <property type="protein sequence ID" value="BAD53269.1"/>
    <property type="molecule type" value="Genomic_DNA"/>
</dbReference>
<dbReference type="EMBL" id="AP003345">
    <property type="protein sequence ID" value="BAD53270.1"/>
    <property type="status" value="ALT_SEQ"/>
    <property type="molecule type" value="Genomic_DNA"/>
</dbReference>
<dbReference type="EMBL" id="AP003345">
    <property type="protein sequence ID" value="BAD53271.1"/>
    <property type="status" value="ALT_SEQ"/>
    <property type="molecule type" value="Genomic_DNA"/>
</dbReference>
<dbReference type="EMBL" id="AP008207">
    <property type="protein sequence ID" value="BAF06397.1"/>
    <property type="molecule type" value="Genomic_DNA"/>
</dbReference>
<dbReference type="EMBL" id="AP014957">
    <property type="protein sequence ID" value="BAS74713.1"/>
    <property type="molecule type" value="Genomic_DNA"/>
</dbReference>
<dbReference type="EMBL" id="AK121338">
    <property type="status" value="NOT_ANNOTATED_CDS"/>
    <property type="molecule type" value="mRNA"/>
</dbReference>
<dbReference type="RefSeq" id="XP_015632244.1">
    <property type="nucleotide sequence ID" value="XM_015776758.1"/>
</dbReference>
<dbReference type="SMR" id="Q5ZAY0"/>
<dbReference type="FunCoup" id="Q5ZAY0">
    <property type="interactions" value="731"/>
</dbReference>
<dbReference type="STRING" id="39947.Q5ZAY0"/>
<dbReference type="PaxDb" id="39947-Q5ZAY0"/>
<dbReference type="EnsemblPlants" id="Os01t0788800-04">
    <molecule id="Q5ZAY0-1"/>
    <property type="protein sequence ID" value="Os01t0788800-04"/>
    <property type="gene ID" value="Os01g0788800"/>
</dbReference>
<dbReference type="Gramene" id="Os01t0788800-04">
    <molecule id="Q5ZAY0-1"/>
    <property type="protein sequence ID" value="Os01t0788800-04"/>
    <property type="gene ID" value="Os01g0788800"/>
</dbReference>
<dbReference type="KEGG" id="dosa:Os01g0788800"/>
<dbReference type="eggNOG" id="ENOG502QU3P">
    <property type="taxonomic scope" value="Eukaryota"/>
</dbReference>
<dbReference type="HOGENOM" id="CLU_015002_2_1_1"/>
<dbReference type="InParanoid" id="Q5ZAY0"/>
<dbReference type="OMA" id="LMTVEMM"/>
<dbReference type="OrthoDB" id="6159439at2759"/>
<dbReference type="PlantReactome" id="R-OSA-9631623">
    <property type="pathway name" value="Regulation of embryo development"/>
</dbReference>
<dbReference type="Proteomes" id="UP000000763">
    <property type="component" value="Chromosome 1"/>
</dbReference>
<dbReference type="Proteomes" id="UP000059680">
    <property type="component" value="Chromosome 1"/>
</dbReference>
<dbReference type="GO" id="GO:0005634">
    <property type="term" value="C:nucleus"/>
    <property type="evidence" value="ECO:0007669"/>
    <property type="project" value="UniProtKB-SubCell"/>
</dbReference>
<dbReference type="GO" id="GO:0003677">
    <property type="term" value="F:DNA binding"/>
    <property type="evidence" value="ECO:0007669"/>
    <property type="project" value="UniProtKB-KW"/>
</dbReference>
<dbReference type="GO" id="GO:0000981">
    <property type="term" value="F:DNA-binding transcription factor activity, RNA polymerase II-specific"/>
    <property type="evidence" value="ECO:0007669"/>
    <property type="project" value="InterPro"/>
</dbReference>
<dbReference type="GO" id="GO:0008289">
    <property type="term" value="F:lipid binding"/>
    <property type="evidence" value="ECO:0007669"/>
    <property type="project" value="InterPro"/>
</dbReference>
<dbReference type="CDD" id="cd00086">
    <property type="entry name" value="homeodomain"/>
    <property type="match status" value="1"/>
</dbReference>
<dbReference type="CDD" id="cd08875">
    <property type="entry name" value="START_ArGLABRA2_like"/>
    <property type="match status" value="1"/>
</dbReference>
<dbReference type="Gene3D" id="3.30.530.20">
    <property type="match status" value="1"/>
</dbReference>
<dbReference type="Gene3D" id="1.10.10.60">
    <property type="entry name" value="Homeodomain-like"/>
    <property type="match status" value="1"/>
</dbReference>
<dbReference type="InterPro" id="IPR042160">
    <property type="entry name" value="GLABRA2/ANL2/PDF2/ATML1-like"/>
</dbReference>
<dbReference type="InterPro" id="IPR001356">
    <property type="entry name" value="HD"/>
</dbReference>
<dbReference type="InterPro" id="IPR017970">
    <property type="entry name" value="Homeobox_CS"/>
</dbReference>
<dbReference type="InterPro" id="IPR009057">
    <property type="entry name" value="Homeodomain-like_sf"/>
</dbReference>
<dbReference type="InterPro" id="IPR023393">
    <property type="entry name" value="START-like_dom_sf"/>
</dbReference>
<dbReference type="InterPro" id="IPR002913">
    <property type="entry name" value="START_lipid-bd_dom"/>
</dbReference>
<dbReference type="PANTHER" id="PTHR45654">
    <property type="entry name" value="HOMEOBOX-LEUCINE ZIPPER PROTEIN MERISTEM L1"/>
    <property type="match status" value="1"/>
</dbReference>
<dbReference type="PANTHER" id="PTHR45654:SF2">
    <property type="entry name" value="HOMEOBOX-LEUCINE ZIPPER PROTEIN TF1"/>
    <property type="match status" value="1"/>
</dbReference>
<dbReference type="Pfam" id="PF00046">
    <property type="entry name" value="Homeodomain"/>
    <property type="match status" value="1"/>
</dbReference>
<dbReference type="Pfam" id="PF01852">
    <property type="entry name" value="START"/>
    <property type="match status" value="1"/>
</dbReference>
<dbReference type="SMART" id="SM00389">
    <property type="entry name" value="HOX"/>
    <property type="match status" value="1"/>
</dbReference>
<dbReference type="SMART" id="SM00234">
    <property type="entry name" value="START"/>
    <property type="match status" value="1"/>
</dbReference>
<dbReference type="SUPFAM" id="SSF55961">
    <property type="entry name" value="Bet v1-like"/>
    <property type="match status" value="2"/>
</dbReference>
<dbReference type="SUPFAM" id="SSF46689">
    <property type="entry name" value="Homeodomain-like"/>
    <property type="match status" value="1"/>
</dbReference>
<dbReference type="PROSITE" id="PS00027">
    <property type="entry name" value="HOMEOBOX_1"/>
    <property type="match status" value="1"/>
</dbReference>
<dbReference type="PROSITE" id="PS50071">
    <property type="entry name" value="HOMEOBOX_2"/>
    <property type="match status" value="1"/>
</dbReference>
<dbReference type="PROSITE" id="PS50848">
    <property type="entry name" value="START"/>
    <property type="match status" value="1"/>
</dbReference>
<sequence length="709" mass="78179">MEMNQQHNEGNESFVALMNGFAGDGTATLPNDGEQRMSIPARELFAAIEADSGLLPVNSSNTNEKRKRRLQRLTGKQSEVLEGFFSICGHPDDGQKRHLSETTGLGLDQVKFWFQNKRTQVKTMCWKEENYKLSVENEILRDENRRVKIAHCTAVCLTCCNSSVQNQLAVEMERLMGQSEWLQQEIARSNGTPPAANLAFQLNSSADYVFSGQHDQQMIAELAKNAMHALIILAESHVALWFPVPGCSYEVLNKMAYDQAYPGDNSANAIGFKTEATRAVSMVMMDYKSVVDFLMDPYNYRTFFPEVISGAVTNRIYTWPTSDGYNGVIQLMTVEMMFPSPLVPARKCTFLRYCNVLNEGLVVVIDVSLDDGSIFSKCRKMPSGFLIQSIRPNSCKVTAIEHVLADDTGVHELYQPCMNGLVFGARRWVATMARQSARMRDVHHNKTAPQVSTKGRKNLMKLADDLLASFAGGIAATGGGTWTVVIGAGTEKDIRVAYRRTTEGSSSYNAILSVTASLRLPLPMRKTFDLLRNLTHRCKWDVLVHGSVVKEEVTIARGVGNDDTVTVLHCKRAGREDRGRTMILQNNGYDASGSFMVYSQIDSELMNTMVLSPSDLPPGRGGPSLYPTGFSLLPDVEAAQDSSGIALGEVGGTLMTMGFQIPVKLASGDRMYSRSAASAIRLMTDTIALVKKTLMNEHSGIYGVSPFHP</sequence>
<protein>
    <recommendedName>
        <fullName>Homeobox-leucine zipper protein TF1</fullName>
    </recommendedName>
    <alternativeName>
        <fullName>HD-ZIP protein TF1</fullName>
    </alternativeName>
    <alternativeName>
        <fullName>Homeodomain transcription factor TF1</fullName>
    </alternativeName>
    <alternativeName>
        <fullName>Protein TRANSCRIPTION FACTOR 1</fullName>
        <shortName>OsTF1</shortName>
    </alternativeName>
</protein>
<evidence type="ECO:0000250" key="1"/>
<evidence type="ECO:0000255" key="2"/>
<evidence type="ECO:0000255" key="3">
    <source>
        <dbReference type="PROSITE-ProRule" id="PRU00108"/>
    </source>
</evidence>
<evidence type="ECO:0000255" key="4">
    <source>
        <dbReference type="PROSITE-ProRule" id="PRU00197"/>
    </source>
</evidence>
<evidence type="ECO:0000269" key="5">
    <source>
    </source>
</evidence>
<evidence type="ECO:0000303" key="6">
    <source>
    </source>
</evidence>
<evidence type="ECO:0000305" key="7"/>
<accession>Q5ZAY0</accession>
<accession>Q5ZAX7</accession>
<accession>Q5ZAX8</accession>
<accession>Q5ZAX9</accession>
<accession>Q8LLU2</accession>